<protein>
    <recommendedName>
        <fullName evidence="1">DNA ligase</fullName>
        <ecNumber evidence="1">6.5.1.2</ecNumber>
    </recommendedName>
    <alternativeName>
        <fullName evidence="1">Polydeoxyribonucleotide synthase [NAD(+)]</fullName>
    </alternativeName>
</protein>
<proteinExistence type="inferred from homology"/>
<organism>
    <name type="scientific">Laribacter hongkongensis (strain HLHK9)</name>
    <dbReference type="NCBI Taxonomy" id="557598"/>
    <lineage>
        <taxon>Bacteria</taxon>
        <taxon>Pseudomonadati</taxon>
        <taxon>Pseudomonadota</taxon>
        <taxon>Betaproteobacteria</taxon>
        <taxon>Neisseriales</taxon>
        <taxon>Aquaspirillaceae</taxon>
        <taxon>Laribacter</taxon>
    </lineage>
</organism>
<accession>C1D4R5</accession>
<gene>
    <name evidence="1" type="primary">ligA</name>
    <name type="ordered locus">LHK_02877</name>
</gene>
<keyword id="KW-0227">DNA damage</keyword>
<keyword id="KW-0234">DNA repair</keyword>
<keyword id="KW-0235">DNA replication</keyword>
<keyword id="KW-0436">Ligase</keyword>
<keyword id="KW-0460">Magnesium</keyword>
<keyword id="KW-0464">Manganese</keyword>
<keyword id="KW-0479">Metal-binding</keyword>
<keyword id="KW-0520">NAD</keyword>
<keyword id="KW-1185">Reference proteome</keyword>
<keyword id="KW-0862">Zinc</keyword>
<name>DNLJ_LARHH</name>
<sequence length="692" mass="73986">MTDLNPTARAAGLRALLHRYNHEYYVLDAPSVPDAEYDRLFRELEALEAAHPELASADSPTRRVGGAPLAAFASVTHRLPMLSLNNVFSDMQDSDPAGRHAELAAFDQRVRDGLGLDEVEYAVEPKFDGLAVSLVYEHGVLVQGATRGDGETGENVTENLRTVRSIPLRLENAPGDDLFAPAVVPARLEVRGEVLMLKRDFERLNSEQDAAGLKRFANPRNAAAGSLRQLDSRITASRRLTFFAYAVAEADGVSLPATHSATMDWLAGLGLPVSRQRSVVRGLAGLTGAYEAMLAQRAGLPFDIDGVVYKVNRLSEQARLGFVSRAPRFAVAHKFPAEEALTVVEDITVQVGRTGAITPVARLQPVFVGGVTVTNATLHNEDEVRRKDVHVGDTVIVRRAGDVIPEVVSVLAERRPPQARAFEMPLVCPVCGSHIVREADEAVARCSGGLYCSAQHKQALQHFASRKALDVEGLGEKLVDQLVDAGLVHTPADLFALDQPALARLERMGDKSAENLVRALDACRHTTLARFVYALGIRNVGEATARDLARHFGTLDALMAADQDMLMTAPDVGPIVARSIVDFFAEAHNREVVDALLAAGVSWPVVETVTSAGVAGVSGKTFVLTGTLPTLGRDDAKARIEAAGGKVTGSVSKKTHYVVAGEAAGSKLDKAHELGITVLDEAALLALLAGNA</sequence>
<reference key="1">
    <citation type="journal article" date="2009" name="PLoS Genet.">
        <title>The complete genome and proteome of Laribacter hongkongensis reveal potential mechanisms for adaptations to different temperatures and habitats.</title>
        <authorList>
            <person name="Woo P.C.Y."/>
            <person name="Lau S.K.P."/>
            <person name="Tse H."/>
            <person name="Teng J.L.L."/>
            <person name="Curreem S.O."/>
            <person name="Tsang A.K.L."/>
            <person name="Fan R.Y.Y."/>
            <person name="Wong G.K.M."/>
            <person name="Huang Y."/>
            <person name="Loman N.J."/>
            <person name="Snyder L.A.S."/>
            <person name="Cai J.J."/>
            <person name="Huang J.-D."/>
            <person name="Mak W."/>
            <person name="Pallen M.J."/>
            <person name="Lok S."/>
            <person name="Yuen K.-Y."/>
        </authorList>
    </citation>
    <scope>NUCLEOTIDE SEQUENCE [LARGE SCALE GENOMIC DNA]</scope>
    <source>
        <strain>HLHK9</strain>
    </source>
</reference>
<feature type="chain" id="PRO_0000380406" description="DNA ligase">
    <location>
        <begin position="1"/>
        <end position="692"/>
    </location>
</feature>
<feature type="domain" description="BRCT" evidence="1">
    <location>
        <begin position="612"/>
        <end position="692"/>
    </location>
</feature>
<feature type="active site" description="N6-AMP-lysine intermediate" evidence="1">
    <location>
        <position position="126"/>
    </location>
</feature>
<feature type="binding site" evidence="1">
    <location>
        <begin position="34"/>
        <end position="38"/>
    </location>
    <ligand>
        <name>NAD(+)</name>
        <dbReference type="ChEBI" id="CHEBI:57540"/>
    </ligand>
</feature>
<feature type="binding site" evidence="1">
    <location>
        <begin position="83"/>
        <end position="84"/>
    </location>
    <ligand>
        <name>NAD(+)</name>
        <dbReference type="ChEBI" id="CHEBI:57540"/>
    </ligand>
</feature>
<feature type="binding site" evidence="1">
    <location>
        <position position="124"/>
    </location>
    <ligand>
        <name>NAD(+)</name>
        <dbReference type="ChEBI" id="CHEBI:57540"/>
    </ligand>
</feature>
<feature type="binding site" evidence="1">
    <location>
        <position position="147"/>
    </location>
    <ligand>
        <name>NAD(+)</name>
        <dbReference type="ChEBI" id="CHEBI:57540"/>
    </ligand>
</feature>
<feature type="binding site" evidence="1">
    <location>
        <position position="193"/>
    </location>
    <ligand>
        <name>NAD(+)</name>
        <dbReference type="ChEBI" id="CHEBI:57540"/>
    </ligand>
</feature>
<feature type="binding site" evidence="1">
    <location>
        <position position="310"/>
    </location>
    <ligand>
        <name>NAD(+)</name>
        <dbReference type="ChEBI" id="CHEBI:57540"/>
    </ligand>
</feature>
<feature type="binding site" evidence="1">
    <location>
        <position position="334"/>
    </location>
    <ligand>
        <name>NAD(+)</name>
        <dbReference type="ChEBI" id="CHEBI:57540"/>
    </ligand>
</feature>
<feature type="binding site" evidence="1">
    <location>
        <position position="428"/>
    </location>
    <ligand>
        <name>Zn(2+)</name>
        <dbReference type="ChEBI" id="CHEBI:29105"/>
    </ligand>
</feature>
<feature type="binding site" evidence="1">
    <location>
        <position position="431"/>
    </location>
    <ligand>
        <name>Zn(2+)</name>
        <dbReference type="ChEBI" id="CHEBI:29105"/>
    </ligand>
</feature>
<feature type="binding site" evidence="1">
    <location>
        <position position="446"/>
    </location>
    <ligand>
        <name>Zn(2+)</name>
        <dbReference type="ChEBI" id="CHEBI:29105"/>
    </ligand>
</feature>
<feature type="binding site" evidence="1">
    <location>
        <position position="452"/>
    </location>
    <ligand>
        <name>Zn(2+)</name>
        <dbReference type="ChEBI" id="CHEBI:29105"/>
    </ligand>
</feature>
<evidence type="ECO:0000255" key="1">
    <source>
        <dbReference type="HAMAP-Rule" id="MF_01588"/>
    </source>
</evidence>
<comment type="function">
    <text evidence="1">DNA ligase that catalyzes the formation of phosphodiester linkages between 5'-phosphoryl and 3'-hydroxyl groups in double-stranded DNA using NAD as a coenzyme and as the energy source for the reaction. It is essential for DNA replication and repair of damaged DNA.</text>
</comment>
<comment type="catalytic activity">
    <reaction evidence="1">
        <text>NAD(+) + (deoxyribonucleotide)n-3'-hydroxyl + 5'-phospho-(deoxyribonucleotide)m = (deoxyribonucleotide)n+m + AMP + beta-nicotinamide D-nucleotide.</text>
        <dbReference type="EC" id="6.5.1.2"/>
    </reaction>
</comment>
<comment type="cofactor">
    <cofactor evidence="1">
        <name>Mg(2+)</name>
        <dbReference type="ChEBI" id="CHEBI:18420"/>
    </cofactor>
    <cofactor evidence="1">
        <name>Mn(2+)</name>
        <dbReference type="ChEBI" id="CHEBI:29035"/>
    </cofactor>
</comment>
<comment type="similarity">
    <text evidence="1">Belongs to the NAD-dependent DNA ligase family. LigA subfamily.</text>
</comment>
<dbReference type="EC" id="6.5.1.2" evidence="1"/>
<dbReference type="EMBL" id="CP001154">
    <property type="protein sequence ID" value="ACO75856.1"/>
    <property type="molecule type" value="Genomic_DNA"/>
</dbReference>
<dbReference type="RefSeq" id="WP_012698319.1">
    <property type="nucleotide sequence ID" value="NC_012559.1"/>
</dbReference>
<dbReference type="SMR" id="C1D4R5"/>
<dbReference type="STRING" id="557598.LHK_02877"/>
<dbReference type="KEGG" id="lhk:LHK_02877"/>
<dbReference type="eggNOG" id="COG0272">
    <property type="taxonomic scope" value="Bacteria"/>
</dbReference>
<dbReference type="HOGENOM" id="CLU_007764_2_1_4"/>
<dbReference type="Proteomes" id="UP000002010">
    <property type="component" value="Chromosome"/>
</dbReference>
<dbReference type="GO" id="GO:0005829">
    <property type="term" value="C:cytosol"/>
    <property type="evidence" value="ECO:0007669"/>
    <property type="project" value="TreeGrafter"/>
</dbReference>
<dbReference type="GO" id="GO:0003677">
    <property type="term" value="F:DNA binding"/>
    <property type="evidence" value="ECO:0007669"/>
    <property type="project" value="InterPro"/>
</dbReference>
<dbReference type="GO" id="GO:0003911">
    <property type="term" value="F:DNA ligase (NAD+) activity"/>
    <property type="evidence" value="ECO:0007669"/>
    <property type="project" value="UniProtKB-UniRule"/>
</dbReference>
<dbReference type="GO" id="GO:0046872">
    <property type="term" value="F:metal ion binding"/>
    <property type="evidence" value="ECO:0007669"/>
    <property type="project" value="UniProtKB-KW"/>
</dbReference>
<dbReference type="GO" id="GO:0006281">
    <property type="term" value="P:DNA repair"/>
    <property type="evidence" value="ECO:0007669"/>
    <property type="project" value="UniProtKB-KW"/>
</dbReference>
<dbReference type="GO" id="GO:0006260">
    <property type="term" value="P:DNA replication"/>
    <property type="evidence" value="ECO:0007669"/>
    <property type="project" value="UniProtKB-KW"/>
</dbReference>
<dbReference type="CDD" id="cd17748">
    <property type="entry name" value="BRCT_DNA_ligase_like"/>
    <property type="match status" value="1"/>
</dbReference>
<dbReference type="CDD" id="cd00114">
    <property type="entry name" value="LIGANc"/>
    <property type="match status" value="1"/>
</dbReference>
<dbReference type="FunFam" id="1.10.150.20:FF:000006">
    <property type="entry name" value="DNA ligase"/>
    <property type="match status" value="1"/>
</dbReference>
<dbReference type="FunFam" id="1.10.150.20:FF:000007">
    <property type="entry name" value="DNA ligase"/>
    <property type="match status" value="1"/>
</dbReference>
<dbReference type="FunFam" id="1.10.287.610:FF:000002">
    <property type="entry name" value="DNA ligase"/>
    <property type="match status" value="1"/>
</dbReference>
<dbReference type="FunFam" id="2.40.50.140:FF:000012">
    <property type="entry name" value="DNA ligase"/>
    <property type="match status" value="1"/>
</dbReference>
<dbReference type="FunFam" id="3.30.470.30:FF:000001">
    <property type="entry name" value="DNA ligase"/>
    <property type="match status" value="1"/>
</dbReference>
<dbReference type="Gene3D" id="6.20.10.30">
    <property type="match status" value="1"/>
</dbReference>
<dbReference type="Gene3D" id="1.10.150.20">
    <property type="entry name" value="5' to 3' exonuclease, C-terminal subdomain"/>
    <property type="match status" value="2"/>
</dbReference>
<dbReference type="Gene3D" id="3.40.50.10190">
    <property type="entry name" value="BRCT domain"/>
    <property type="match status" value="1"/>
</dbReference>
<dbReference type="Gene3D" id="3.30.470.30">
    <property type="entry name" value="DNA ligase/mRNA capping enzyme"/>
    <property type="match status" value="1"/>
</dbReference>
<dbReference type="Gene3D" id="1.10.287.610">
    <property type="entry name" value="Helix hairpin bin"/>
    <property type="match status" value="1"/>
</dbReference>
<dbReference type="Gene3D" id="2.40.50.140">
    <property type="entry name" value="Nucleic acid-binding proteins"/>
    <property type="match status" value="1"/>
</dbReference>
<dbReference type="HAMAP" id="MF_01588">
    <property type="entry name" value="DNA_ligase_A"/>
    <property type="match status" value="1"/>
</dbReference>
<dbReference type="InterPro" id="IPR001357">
    <property type="entry name" value="BRCT_dom"/>
</dbReference>
<dbReference type="InterPro" id="IPR036420">
    <property type="entry name" value="BRCT_dom_sf"/>
</dbReference>
<dbReference type="InterPro" id="IPR041663">
    <property type="entry name" value="DisA/LigA_HHH"/>
</dbReference>
<dbReference type="InterPro" id="IPR001679">
    <property type="entry name" value="DNA_ligase"/>
</dbReference>
<dbReference type="InterPro" id="IPR018239">
    <property type="entry name" value="DNA_ligase_AS"/>
</dbReference>
<dbReference type="InterPro" id="IPR033136">
    <property type="entry name" value="DNA_ligase_CS"/>
</dbReference>
<dbReference type="InterPro" id="IPR013839">
    <property type="entry name" value="DNAligase_adenylation"/>
</dbReference>
<dbReference type="InterPro" id="IPR013840">
    <property type="entry name" value="DNAligase_N"/>
</dbReference>
<dbReference type="InterPro" id="IPR003583">
    <property type="entry name" value="Hlx-hairpin-Hlx_DNA-bd_motif"/>
</dbReference>
<dbReference type="InterPro" id="IPR012340">
    <property type="entry name" value="NA-bd_OB-fold"/>
</dbReference>
<dbReference type="InterPro" id="IPR004150">
    <property type="entry name" value="NAD_DNA_ligase_OB"/>
</dbReference>
<dbReference type="InterPro" id="IPR010994">
    <property type="entry name" value="RuvA_2-like"/>
</dbReference>
<dbReference type="InterPro" id="IPR004149">
    <property type="entry name" value="Znf_DNAligase_C4"/>
</dbReference>
<dbReference type="NCBIfam" id="TIGR00575">
    <property type="entry name" value="dnlj"/>
    <property type="match status" value="1"/>
</dbReference>
<dbReference type="NCBIfam" id="NF005932">
    <property type="entry name" value="PRK07956.1"/>
    <property type="match status" value="1"/>
</dbReference>
<dbReference type="PANTHER" id="PTHR23389">
    <property type="entry name" value="CHROMOSOME TRANSMISSION FIDELITY FACTOR 18"/>
    <property type="match status" value="1"/>
</dbReference>
<dbReference type="PANTHER" id="PTHR23389:SF9">
    <property type="entry name" value="DNA LIGASE"/>
    <property type="match status" value="1"/>
</dbReference>
<dbReference type="Pfam" id="PF00533">
    <property type="entry name" value="BRCT"/>
    <property type="match status" value="1"/>
</dbReference>
<dbReference type="Pfam" id="PF01653">
    <property type="entry name" value="DNA_ligase_aden"/>
    <property type="match status" value="1"/>
</dbReference>
<dbReference type="Pfam" id="PF03120">
    <property type="entry name" value="DNA_ligase_OB"/>
    <property type="match status" value="1"/>
</dbReference>
<dbReference type="Pfam" id="PF03119">
    <property type="entry name" value="DNA_ligase_ZBD"/>
    <property type="match status" value="1"/>
</dbReference>
<dbReference type="Pfam" id="PF12826">
    <property type="entry name" value="HHH_2"/>
    <property type="match status" value="1"/>
</dbReference>
<dbReference type="Pfam" id="PF14520">
    <property type="entry name" value="HHH_5"/>
    <property type="match status" value="1"/>
</dbReference>
<dbReference type="Pfam" id="PF22745">
    <property type="entry name" value="Nlig-Ia"/>
    <property type="match status" value="1"/>
</dbReference>
<dbReference type="PIRSF" id="PIRSF001604">
    <property type="entry name" value="LigA"/>
    <property type="match status" value="1"/>
</dbReference>
<dbReference type="SMART" id="SM00292">
    <property type="entry name" value="BRCT"/>
    <property type="match status" value="1"/>
</dbReference>
<dbReference type="SMART" id="SM00278">
    <property type="entry name" value="HhH1"/>
    <property type="match status" value="4"/>
</dbReference>
<dbReference type="SMART" id="SM00532">
    <property type="entry name" value="LIGANc"/>
    <property type="match status" value="1"/>
</dbReference>
<dbReference type="SUPFAM" id="SSF52113">
    <property type="entry name" value="BRCT domain"/>
    <property type="match status" value="1"/>
</dbReference>
<dbReference type="SUPFAM" id="SSF56091">
    <property type="entry name" value="DNA ligase/mRNA capping enzyme, catalytic domain"/>
    <property type="match status" value="1"/>
</dbReference>
<dbReference type="SUPFAM" id="SSF50249">
    <property type="entry name" value="Nucleic acid-binding proteins"/>
    <property type="match status" value="1"/>
</dbReference>
<dbReference type="SUPFAM" id="SSF47781">
    <property type="entry name" value="RuvA domain 2-like"/>
    <property type="match status" value="1"/>
</dbReference>
<dbReference type="PROSITE" id="PS50172">
    <property type="entry name" value="BRCT"/>
    <property type="match status" value="1"/>
</dbReference>
<dbReference type="PROSITE" id="PS01055">
    <property type="entry name" value="DNA_LIGASE_N1"/>
    <property type="match status" value="1"/>
</dbReference>
<dbReference type="PROSITE" id="PS01056">
    <property type="entry name" value="DNA_LIGASE_N2"/>
    <property type="match status" value="1"/>
</dbReference>